<protein>
    <recommendedName>
        <fullName>MICOS complex subunit mic60</fullName>
    </recommendedName>
    <alternativeName>
        <fullName>Mitofilin</fullName>
    </alternativeName>
</protein>
<keyword id="KW-0175">Coiled coil</keyword>
<keyword id="KW-0472">Membrane</keyword>
<keyword id="KW-0496">Mitochondrion</keyword>
<keyword id="KW-0999">Mitochondrion inner membrane</keyword>
<keyword id="KW-0809">Transit peptide</keyword>
<keyword id="KW-0812">Transmembrane</keyword>
<keyword id="KW-1133">Transmembrane helix</keyword>
<dbReference type="EMBL" id="DS499598">
    <property type="protein sequence ID" value="EDP50181.1"/>
    <property type="molecule type" value="Genomic_DNA"/>
</dbReference>
<dbReference type="SMR" id="B0Y5Z6"/>
<dbReference type="EnsemblFungi" id="EDP50181">
    <property type="protein sequence ID" value="EDP50181"/>
    <property type="gene ID" value="AFUB_065130"/>
</dbReference>
<dbReference type="HOGENOM" id="CLU_008024_1_2_1"/>
<dbReference type="OrthoDB" id="119514at5052"/>
<dbReference type="PhylomeDB" id="B0Y5Z6"/>
<dbReference type="Proteomes" id="UP000001699">
    <property type="component" value="Unassembled WGS sequence"/>
</dbReference>
<dbReference type="GO" id="GO:0061617">
    <property type="term" value="C:MICOS complex"/>
    <property type="evidence" value="ECO:0007669"/>
    <property type="project" value="TreeGrafter"/>
</dbReference>
<dbReference type="GO" id="GO:0042407">
    <property type="term" value="P:cristae formation"/>
    <property type="evidence" value="ECO:0007669"/>
    <property type="project" value="TreeGrafter"/>
</dbReference>
<dbReference type="InterPro" id="IPR019133">
    <property type="entry name" value="MIC60"/>
</dbReference>
<dbReference type="PANTHER" id="PTHR15415:SF7">
    <property type="entry name" value="MICOS COMPLEX SUBUNIT MIC60"/>
    <property type="match status" value="1"/>
</dbReference>
<dbReference type="PANTHER" id="PTHR15415">
    <property type="entry name" value="MITOFILIN"/>
    <property type="match status" value="1"/>
</dbReference>
<dbReference type="Pfam" id="PF09731">
    <property type="entry name" value="Mitofilin"/>
    <property type="match status" value="2"/>
</dbReference>
<name>MIC60_ASPFC</name>
<organism>
    <name type="scientific">Aspergillus fumigatus (strain CBS 144.89 / FGSC A1163 / CEA10)</name>
    <name type="common">Neosartorya fumigata</name>
    <dbReference type="NCBI Taxonomy" id="451804"/>
    <lineage>
        <taxon>Eukaryota</taxon>
        <taxon>Fungi</taxon>
        <taxon>Dikarya</taxon>
        <taxon>Ascomycota</taxon>
        <taxon>Pezizomycotina</taxon>
        <taxon>Eurotiomycetes</taxon>
        <taxon>Eurotiomycetidae</taxon>
        <taxon>Eurotiales</taxon>
        <taxon>Aspergillaceae</taxon>
        <taxon>Aspergillus</taxon>
        <taxon>Aspergillus subgen. Fumigati</taxon>
    </lineage>
</organism>
<proteinExistence type="inferred from homology"/>
<sequence length="624" mass="69525">MLRSSFTQSRQLLLSQARSRTAAQWLPKAGASNRLAGQRFFADAKPPVTGAPTPASPSSESSIPPETVPKPSPAAEAPLPPPPPPAPARKTGRFRKFLLYLILTSGFAYGGGIFLALKSDNFHDFFTEYVPYGEDCVLYFEERDFYRRFPNTLRNQNRAPKDEGHTVTIPSKSGLSWKVAEEESGADVSQKGPHMSALDNGDKAQLKPGAAKPEEKVATVEKVKAESAAKEQTAEDKKKVKEEPKKPAAPAVTPIEFATVSEGDEEVVQELVKTFNDIITVIGADENAHKFSGAVNKAKEELRTIGEKIIAIRNEARKAAQEEIKQAHATFDESARELIRRFEEARAHDAAQYREEFEAERERLARAYQEKVNTELQRAQEVAEQRLKNELVEQAIELNRKYLHEVKDLVEREREGRLSKLNELTANVNLLEKLTTDWKEVIDTNLKTQQLQVAVDAVRSVLERSTVPRPFVRELVAVKELAAGDPVVEAAIASINPTAYQRGIPSTSQIIERFRRVADEVRKASLLPEDAGIASHAASLVLSKVMFKKDAVAGSDDVESVLLRTEHLLEEGNLDDAAREMNTLKGWAKILSKDWLSDVRRVLEVKQALEVRLGPFTSLFHLYR</sequence>
<reference key="1">
    <citation type="journal article" date="2008" name="PLoS Genet.">
        <title>Genomic islands in the pathogenic filamentous fungus Aspergillus fumigatus.</title>
        <authorList>
            <person name="Fedorova N.D."/>
            <person name="Khaldi N."/>
            <person name="Joardar V.S."/>
            <person name="Maiti R."/>
            <person name="Amedeo P."/>
            <person name="Anderson M.J."/>
            <person name="Crabtree J."/>
            <person name="Silva J.C."/>
            <person name="Badger J.H."/>
            <person name="Albarraq A."/>
            <person name="Angiuoli S."/>
            <person name="Bussey H."/>
            <person name="Bowyer P."/>
            <person name="Cotty P.J."/>
            <person name="Dyer P.S."/>
            <person name="Egan A."/>
            <person name="Galens K."/>
            <person name="Fraser-Liggett C.M."/>
            <person name="Haas B.J."/>
            <person name="Inman J.M."/>
            <person name="Kent R."/>
            <person name="Lemieux S."/>
            <person name="Malavazi I."/>
            <person name="Orvis J."/>
            <person name="Roemer T."/>
            <person name="Ronning C.M."/>
            <person name="Sundaram J.P."/>
            <person name="Sutton G."/>
            <person name="Turner G."/>
            <person name="Venter J.C."/>
            <person name="White O.R."/>
            <person name="Whitty B.R."/>
            <person name="Youngman P."/>
            <person name="Wolfe K.H."/>
            <person name="Goldman G.H."/>
            <person name="Wortman J.R."/>
            <person name="Jiang B."/>
            <person name="Denning D.W."/>
            <person name="Nierman W.C."/>
        </authorList>
    </citation>
    <scope>NUCLEOTIDE SEQUENCE [LARGE SCALE GENOMIC DNA]</scope>
    <source>
        <strain>CBS 144.89 / FGSC A1163 / CEA10</strain>
    </source>
</reference>
<gene>
    <name type="primary">mic60</name>
    <name type="ORF">AFUB_065130</name>
</gene>
<accession>B0Y5Z6</accession>
<feature type="transit peptide" description="Mitochondrion" evidence="2">
    <location>
        <begin position="1"/>
        <end position="41"/>
    </location>
</feature>
<feature type="chain" id="PRO_0000406645" description="MICOS complex subunit mic60">
    <location>
        <begin position="42"/>
        <end position="624"/>
    </location>
</feature>
<feature type="topological domain" description="Mitochondrial matrix" evidence="2">
    <location>
        <begin position="42"/>
        <end position="96"/>
    </location>
</feature>
<feature type="transmembrane region" description="Helical" evidence="2">
    <location>
        <begin position="97"/>
        <end position="117"/>
    </location>
</feature>
<feature type="topological domain" description="Mitochondrial intermembrane" evidence="2">
    <location>
        <begin position="118"/>
        <end position="624"/>
    </location>
</feature>
<feature type="region of interest" description="Disordered" evidence="3">
    <location>
        <begin position="42"/>
        <end position="89"/>
    </location>
</feature>
<feature type="region of interest" description="Disordered" evidence="3">
    <location>
        <begin position="180"/>
        <end position="249"/>
    </location>
</feature>
<feature type="coiled-coil region" evidence="2">
    <location>
        <begin position="295"/>
        <end position="440"/>
    </location>
</feature>
<feature type="compositionally biased region" description="Low complexity" evidence="3">
    <location>
        <begin position="46"/>
        <end position="65"/>
    </location>
</feature>
<feature type="compositionally biased region" description="Pro residues" evidence="3">
    <location>
        <begin position="66"/>
        <end position="87"/>
    </location>
</feature>
<feature type="compositionally biased region" description="Basic and acidic residues" evidence="3">
    <location>
        <begin position="212"/>
        <end position="246"/>
    </location>
</feature>
<comment type="function">
    <text evidence="1">Component of the MICOS complex, a large protein complex of the mitochondrial inner membrane that plays crucial roles in the maintenance of crista junctions, inner membrane architecture, and formation of contact sites to the outer membrane. Plays a role in keeping cristae membranes connected to the inner boundary membrane. Also promotes protein import via the mitochondrial intermembrane space assembly (MIA) pathway (By similarity).</text>
</comment>
<comment type="subunit">
    <text evidence="1">Component of the mitochondrial contact site and cristae organizing system (MICOS) complex.</text>
</comment>
<comment type="subcellular location">
    <subcellularLocation>
        <location evidence="1">Mitochondrion inner membrane</location>
        <topology evidence="1">Single-pass membrane protein</topology>
    </subcellularLocation>
</comment>
<comment type="similarity">
    <text evidence="4">Belongs to the MICOS complex subunit Mic60 family.</text>
</comment>
<evidence type="ECO:0000250" key="1"/>
<evidence type="ECO:0000255" key="2"/>
<evidence type="ECO:0000256" key="3">
    <source>
        <dbReference type="SAM" id="MobiDB-lite"/>
    </source>
</evidence>
<evidence type="ECO:0000305" key="4"/>